<proteinExistence type="evidence at protein level"/>
<organism>
    <name type="scientific">Perisphaeria cf. scabrella (strain SR-2005)</name>
    <name type="common">Cockroach</name>
    <dbReference type="NCBI Taxonomy" id="348759"/>
    <lineage>
        <taxon>Eukaryota</taxon>
        <taxon>Metazoa</taxon>
        <taxon>Ecdysozoa</taxon>
        <taxon>Arthropoda</taxon>
        <taxon>Hexapoda</taxon>
        <taxon>Insecta</taxon>
        <taxon>Pterygota</taxon>
        <taxon>Neoptera</taxon>
        <taxon>Polyneoptera</taxon>
        <taxon>Dictyoptera</taxon>
        <taxon>Blattodea</taxon>
        <taxon>Blaberoidea</taxon>
        <taxon>Blaberidae</taxon>
        <taxon>Perisphaerinae</taxon>
        <taxon>Perisphaeria</taxon>
    </lineage>
</organism>
<keyword id="KW-0027">Amidation</keyword>
<keyword id="KW-0903">Direct protein sequencing</keyword>
<keyword id="KW-0527">Neuropeptide</keyword>
<keyword id="KW-0964">Secreted</keyword>
<protein>
    <recommendedName>
        <fullName evidence="3">Periviscerokinin-3</fullName>
        <shortName evidence="3">PerSc-PVK-3</shortName>
    </recommendedName>
</protein>
<sequence length="11" mass="1147">GSSGMIPFPRV</sequence>
<dbReference type="GO" id="GO:0005576">
    <property type="term" value="C:extracellular region"/>
    <property type="evidence" value="ECO:0007669"/>
    <property type="project" value="UniProtKB-SubCell"/>
</dbReference>
<dbReference type="GO" id="GO:0007218">
    <property type="term" value="P:neuropeptide signaling pathway"/>
    <property type="evidence" value="ECO:0007669"/>
    <property type="project" value="UniProtKB-KW"/>
</dbReference>
<dbReference type="InterPro" id="IPR013231">
    <property type="entry name" value="Periviscerokinin"/>
</dbReference>
<dbReference type="Pfam" id="PF08259">
    <property type="entry name" value="Periviscerokin"/>
    <property type="match status" value="1"/>
</dbReference>
<evidence type="ECO:0000255" key="1"/>
<evidence type="ECO:0000269" key="2">
    <source>
    </source>
</evidence>
<evidence type="ECO:0000303" key="3">
    <source>
    </source>
</evidence>
<evidence type="ECO:0000305" key="4"/>
<reference evidence="4" key="1">
    <citation type="journal article" date="2009" name="BMC Evol. Biol.">
        <title>A proteomic approach for studying insect phylogeny: CAPA peptides of ancient insect taxa (Dictyoptera, Blattoptera) as a test case.</title>
        <authorList>
            <person name="Roth S."/>
            <person name="Fromm B."/>
            <person name="Gaede G."/>
            <person name="Predel R."/>
        </authorList>
    </citation>
    <scope>PROTEIN SEQUENCE</scope>
    <scope>AMIDATION AT VAL-11</scope>
    <source>
        <tissue evidence="2">Abdominal perisympathetic organs</tissue>
    </source>
</reference>
<accession>P85725</accession>
<feature type="peptide" id="PRO_0000378848" description="Periviscerokinin-3" evidence="2">
    <location>
        <begin position="1"/>
        <end position="11"/>
    </location>
</feature>
<feature type="modified residue" description="Valine amide" evidence="2">
    <location>
        <position position="11"/>
    </location>
</feature>
<name>PVK3_PERSS</name>
<comment type="function">
    <text evidence="4">Mediates visceral muscle contractile activity (myotropic activity).</text>
</comment>
<comment type="subcellular location">
    <subcellularLocation>
        <location evidence="4">Secreted</location>
    </subcellularLocation>
</comment>
<comment type="similarity">
    <text evidence="1">Belongs to the periviscerokinin family.</text>
</comment>